<dbReference type="EMBL" id="CP001600">
    <property type="protein sequence ID" value="ACR69609.1"/>
    <property type="molecule type" value="Genomic_DNA"/>
</dbReference>
<dbReference type="RefSeq" id="WP_015871725.1">
    <property type="nucleotide sequence ID" value="NZ_CP169062.1"/>
</dbReference>
<dbReference type="SMR" id="C5BAC9"/>
<dbReference type="STRING" id="67780.B6E78_04340"/>
<dbReference type="GeneID" id="69539358"/>
<dbReference type="KEGG" id="eic:NT01EI_2439"/>
<dbReference type="PATRIC" id="fig|634503.3.peg.2162"/>
<dbReference type="HOGENOM" id="CLU_049853_0_0_6"/>
<dbReference type="OrthoDB" id="6450805at2"/>
<dbReference type="Proteomes" id="UP000001485">
    <property type="component" value="Chromosome"/>
</dbReference>
<dbReference type="GO" id="GO:0005737">
    <property type="term" value="C:cytoplasm"/>
    <property type="evidence" value="ECO:0007669"/>
    <property type="project" value="UniProtKB-UniRule"/>
</dbReference>
<dbReference type="GO" id="GO:0009295">
    <property type="term" value="C:nucleoid"/>
    <property type="evidence" value="ECO:0007669"/>
    <property type="project" value="UniProtKB-SubCell"/>
</dbReference>
<dbReference type="GO" id="GO:0005509">
    <property type="term" value="F:calcium ion binding"/>
    <property type="evidence" value="ECO:0007669"/>
    <property type="project" value="UniProtKB-UniRule"/>
</dbReference>
<dbReference type="GO" id="GO:0051301">
    <property type="term" value="P:cell division"/>
    <property type="evidence" value="ECO:0007669"/>
    <property type="project" value="UniProtKB-KW"/>
</dbReference>
<dbReference type="GO" id="GO:0030261">
    <property type="term" value="P:chromosome condensation"/>
    <property type="evidence" value="ECO:0007669"/>
    <property type="project" value="UniProtKB-KW"/>
</dbReference>
<dbReference type="GO" id="GO:0007059">
    <property type="term" value="P:chromosome segregation"/>
    <property type="evidence" value="ECO:0007669"/>
    <property type="project" value="UniProtKB-UniRule"/>
</dbReference>
<dbReference type="GO" id="GO:0006260">
    <property type="term" value="P:DNA replication"/>
    <property type="evidence" value="ECO:0007669"/>
    <property type="project" value="UniProtKB-UniRule"/>
</dbReference>
<dbReference type="CDD" id="cd16337">
    <property type="entry name" value="MukF_C"/>
    <property type="match status" value="1"/>
</dbReference>
<dbReference type="CDD" id="cd16335">
    <property type="entry name" value="MukF_N"/>
    <property type="match status" value="1"/>
</dbReference>
<dbReference type="Gene3D" id="1.20.58.590">
    <property type="entry name" value="Chromosome partition protein MukF, middle domain"/>
    <property type="match status" value="1"/>
</dbReference>
<dbReference type="Gene3D" id="1.10.225.40">
    <property type="entry name" value="MukF, C-terminal domain"/>
    <property type="match status" value="1"/>
</dbReference>
<dbReference type="Gene3D" id="1.10.10.10">
    <property type="entry name" value="Winged helix-like DNA-binding domain superfamily/Winged helix DNA-binding domain"/>
    <property type="match status" value="1"/>
</dbReference>
<dbReference type="HAMAP" id="MF_01803">
    <property type="entry name" value="MukF"/>
    <property type="match status" value="1"/>
</dbReference>
<dbReference type="InterPro" id="IPR005582">
    <property type="entry name" value="Chromosome_partition_MukF"/>
</dbReference>
<dbReference type="InterPro" id="IPR033441">
    <property type="entry name" value="MukF_C"/>
</dbReference>
<dbReference type="InterPro" id="IPR038198">
    <property type="entry name" value="MukF_C_sf"/>
</dbReference>
<dbReference type="InterPro" id="IPR033440">
    <property type="entry name" value="MukF_M"/>
</dbReference>
<dbReference type="InterPro" id="IPR036141">
    <property type="entry name" value="MukF_M_sp"/>
</dbReference>
<dbReference type="InterPro" id="IPR033439">
    <property type="entry name" value="MukF_WHTH"/>
</dbReference>
<dbReference type="InterPro" id="IPR036388">
    <property type="entry name" value="WH-like_DNA-bd_sf"/>
</dbReference>
<dbReference type="InterPro" id="IPR036390">
    <property type="entry name" value="WH_DNA-bd_sf"/>
</dbReference>
<dbReference type="NCBIfam" id="NF003615">
    <property type="entry name" value="PRK05260.1"/>
    <property type="match status" value="1"/>
</dbReference>
<dbReference type="Pfam" id="PF03882">
    <property type="entry name" value="KicB"/>
    <property type="match status" value="1"/>
</dbReference>
<dbReference type="Pfam" id="PF17193">
    <property type="entry name" value="MukF_C"/>
    <property type="match status" value="1"/>
</dbReference>
<dbReference type="Pfam" id="PF17192">
    <property type="entry name" value="MukF_M"/>
    <property type="match status" value="1"/>
</dbReference>
<dbReference type="PIRSF" id="PIRSF018282">
    <property type="entry name" value="MukF"/>
    <property type="match status" value="1"/>
</dbReference>
<dbReference type="SUPFAM" id="SSF140570">
    <property type="entry name" value="MukF C-terminal domain-like"/>
    <property type="match status" value="1"/>
</dbReference>
<dbReference type="SUPFAM" id="SSF46785">
    <property type="entry name" value="Winged helix' DNA-binding domain"/>
    <property type="match status" value="1"/>
</dbReference>
<reference key="1">
    <citation type="submission" date="2009-03" db="EMBL/GenBank/DDBJ databases">
        <title>Complete genome sequence of Edwardsiella ictaluri 93-146.</title>
        <authorList>
            <person name="Williams M.L."/>
            <person name="Gillaspy A.F."/>
            <person name="Dyer D.W."/>
            <person name="Thune R.L."/>
            <person name="Waldbieser G.C."/>
            <person name="Schuster S.C."/>
            <person name="Gipson J."/>
            <person name="Zaitshik J."/>
            <person name="Landry C."/>
            <person name="Lawrence M.L."/>
        </authorList>
    </citation>
    <scope>NUCLEOTIDE SEQUENCE [LARGE SCALE GENOMIC DNA]</scope>
    <source>
        <strain>93-146</strain>
    </source>
</reference>
<feature type="chain" id="PRO_1000215939" description="Chromosome partition protein MukF">
    <location>
        <begin position="1"/>
        <end position="440"/>
    </location>
</feature>
<feature type="region of interest" description="Leucine-zipper">
    <location>
        <begin position="208"/>
        <end position="236"/>
    </location>
</feature>
<comment type="function">
    <text evidence="1">Involved in chromosome condensation, segregation and cell cycle progression. May participate in facilitating chromosome segregation by condensation DNA from both sides of a centrally located replisome during cell division. Not required for mini-F plasmid partitioning. Probably acts via its interaction with MukB and MukE. Overexpression results in anucleate cells. It has a calcium binding activity.</text>
</comment>
<comment type="subunit">
    <text evidence="1">Interacts, and probably forms a ternary complex, with MukE and MukB via its C-terminal region. The complex formation is stimulated by calcium or magnesium. It is required for an interaction between MukE and MukB.</text>
</comment>
<comment type="subcellular location">
    <subcellularLocation>
        <location evidence="1">Cytoplasm</location>
        <location evidence="1">Nucleoid</location>
    </subcellularLocation>
    <text evidence="1">Restricted to the nucleoid region.</text>
</comment>
<comment type="similarity">
    <text evidence="1">Belongs to the MukF family.</text>
</comment>
<proteinExistence type="inferred from homology"/>
<keyword id="KW-0106">Calcium</keyword>
<keyword id="KW-0131">Cell cycle</keyword>
<keyword id="KW-0132">Cell division</keyword>
<keyword id="KW-0159">Chromosome partition</keyword>
<keyword id="KW-0963">Cytoplasm</keyword>
<keyword id="KW-0226">DNA condensation</keyword>
<gene>
    <name evidence="1" type="primary">mukF</name>
    <name type="ordered locus">NT01EI_2439</name>
</gene>
<sequence length="440" mass="50422">MSDFSQTVPELVAWARKNDFALTLPTERLAFLLAIATLNGERLDGEMSEGDLVDVFRHVSKTFEQTHETVAQRANNAINDLVKQRLLNRFTSELAEGNAIYRLTPLGISISDYYIRQREFSTLRLSMQLSIVAQELRAAGDAAEEGGDEFHWQRNVFAPLKYSVAEIFDSIDLTQRLMDEQQQGVKRDIAGLLTQDWRAAISSCELLLSETSGTLRELQDTLEAAGDKLQANLLRIQDATLGQEALGFVDKLVFDLQAKLDRIISWGQQAIDLWIGYDRHVHKFIRTAIDMDKNRVFAQRLRQSVQGYLEAPWALTYANAERLLDMRDEELMLLNAEVTGELPPDLEFEEYSELRERLAALIEQELQVYRQEQRPLDLGRVLREYLARYPRQRHFDMARILVDQAVRLGVAEADFNGLQAQWQAINEYGAKVQAHVIDKY</sequence>
<accession>C5BAC9</accession>
<protein>
    <recommendedName>
        <fullName evidence="1">Chromosome partition protein MukF</fullName>
    </recommendedName>
</protein>
<name>MUKF_EDWI9</name>
<evidence type="ECO:0000255" key="1">
    <source>
        <dbReference type="HAMAP-Rule" id="MF_01803"/>
    </source>
</evidence>
<organism>
    <name type="scientific">Edwardsiella ictaluri (strain 93-146)</name>
    <dbReference type="NCBI Taxonomy" id="634503"/>
    <lineage>
        <taxon>Bacteria</taxon>
        <taxon>Pseudomonadati</taxon>
        <taxon>Pseudomonadota</taxon>
        <taxon>Gammaproteobacteria</taxon>
        <taxon>Enterobacterales</taxon>
        <taxon>Hafniaceae</taxon>
        <taxon>Edwardsiella</taxon>
    </lineage>
</organism>